<accession>E7EKM1</accession>
<comment type="function">
    <text evidence="3">Antimicrobial peptide. Active against some Gram-positive and Gram-negative bacterial strains. Active against fungus C.glabrata 090902 but not against C.albicans ATCC 12231. Shows weak hemolytic activity against human erythrocytes.</text>
</comment>
<comment type="subcellular location">
    <subcellularLocation>
        <location evidence="6">Secreted</location>
    </subcellularLocation>
</comment>
<comment type="tissue specificity">
    <text evidence="6">Expressed by the skin glands.</text>
</comment>
<comment type="similarity">
    <text evidence="5">Belongs to the frog skin active peptide (FSAP) family. Temporin subfamily.</text>
</comment>
<proteinExistence type="inferred from homology"/>
<sequence length="61" mass="7007">MFTLKKTLLLLFFLGTINLSLCEEERNAEEERRDGDDEMDVEVKKRFITGLISGLMKALGK</sequence>
<evidence type="ECO:0000250" key="1">
    <source>
        <dbReference type="UniProtKB" id="E7EKJ7"/>
    </source>
</evidence>
<evidence type="ECO:0000255" key="2"/>
<evidence type="ECO:0000269" key="3">
    <source>
    </source>
</evidence>
<evidence type="ECO:0000303" key="4">
    <source>
    </source>
</evidence>
<evidence type="ECO:0000305" key="5"/>
<evidence type="ECO:0000305" key="6">
    <source>
    </source>
</evidence>
<evidence type="ECO:0000312" key="7">
    <source>
        <dbReference type="EMBL" id="ADV36221.1"/>
    </source>
</evidence>
<keyword id="KW-0027">Amidation</keyword>
<keyword id="KW-0878">Amphibian defense peptide</keyword>
<keyword id="KW-0044">Antibiotic</keyword>
<keyword id="KW-0929">Antimicrobial</keyword>
<keyword id="KW-0165">Cleavage on pair of basic residues</keyword>
<keyword id="KW-0204">Cytolysis</keyword>
<keyword id="KW-0295">Fungicide</keyword>
<keyword id="KW-0354">Hemolysis</keyword>
<keyword id="KW-0964">Secreted</keyword>
<keyword id="KW-0732">Signal</keyword>
<organism evidence="4">
    <name type="scientific">Sylvirana spinulosa</name>
    <name type="common">Fine-spined frog</name>
    <name type="synonym">Hylarana spinulosa</name>
    <dbReference type="NCBI Taxonomy" id="369515"/>
    <lineage>
        <taxon>Eukaryota</taxon>
        <taxon>Metazoa</taxon>
        <taxon>Chordata</taxon>
        <taxon>Craniata</taxon>
        <taxon>Vertebrata</taxon>
        <taxon>Euteleostomi</taxon>
        <taxon>Amphibia</taxon>
        <taxon>Batrachia</taxon>
        <taxon>Anura</taxon>
        <taxon>Neobatrachia</taxon>
        <taxon>Ranoidea</taxon>
        <taxon>Ranidae</taxon>
        <taxon>Sylvirana</taxon>
    </lineage>
</organism>
<name>TP4_SYLSP</name>
<feature type="signal peptide" evidence="2">
    <location>
        <begin position="1"/>
        <end position="22"/>
    </location>
</feature>
<feature type="propeptide" id="PRO_0000439792" description="Removed in mature form" evidence="6">
    <location>
        <begin position="23"/>
        <end position="44"/>
    </location>
</feature>
<feature type="peptide" id="PRO_0000439793" description="Temporin-SN4" evidence="4">
    <location>
        <begin position="47"/>
        <end position="61"/>
    </location>
</feature>
<feature type="modified residue" description="Lysine amide" evidence="1">
    <location>
        <position position="61"/>
    </location>
</feature>
<protein>
    <recommendedName>
        <fullName evidence="4">Temporin-SN4</fullName>
    </recommendedName>
</protein>
<reference evidence="7" key="1">
    <citation type="journal article" date="2013" name="Biochimie">
        <title>Identification of multiple antimicrobial peptides from the skin of fine-spined frog, Hylarana spinulosa (Ranidae).</title>
        <authorList>
            <person name="Yang X."/>
            <person name="Hu Y."/>
            <person name="Xu S."/>
            <person name="Hu Y."/>
            <person name="Meng H."/>
            <person name="Guo C."/>
            <person name="Liu Y."/>
            <person name="Liu J."/>
            <person name="Yu Z."/>
            <person name="Wang H."/>
        </authorList>
    </citation>
    <scope>NUCLEOTIDE SEQUENCE [MRNA]</scope>
    <scope>FUNCTION</scope>
    <scope>SYNTHESIS</scope>
    <source>
        <tissue evidence="4">Skin</tissue>
    </source>
</reference>
<dbReference type="EMBL" id="HQ735198">
    <property type="protein sequence ID" value="ADV36221.1"/>
    <property type="molecule type" value="mRNA"/>
</dbReference>
<dbReference type="GO" id="GO:0005576">
    <property type="term" value="C:extracellular region"/>
    <property type="evidence" value="ECO:0007669"/>
    <property type="project" value="UniProtKB-SubCell"/>
</dbReference>
<dbReference type="GO" id="GO:0050832">
    <property type="term" value="P:defense response to fungus"/>
    <property type="evidence" value="ECO:0000314"/>
    <property type="project" value="UniProtKB"/>
</dbReference>
<dbReference type="GO" id="GO:0050829">
    <property type="term" value="P:defense response to Gram-negative bacterium"/>
    <property type="evidence" value="ECO:0000314"/>
    <property type="project" value="UniProtKB"/>
</dbReference>
<dbReference type="GO" id="GO:0050830">
    <property type="term" value="P:defense response to Gram-positive bacterium"/>
    <property type="evidence" value="ECO:0000314"/>
    <property type="project" value="UniProtKB"/>
</dbReference>
<dbReference type="GO" id="GO:0044179">
    <property type="term" value="P:hemolysis in another organism"/>
    <property type="evidence" value="ECO:0000314"/>
    <property type="project" value="UniProtKB"/>
</dbReference>
<dbReference type="InterPro" id="IPR004275">
    <property type="entry name" value="Frog_antimicrobial_propeptide"/>
</dbReference>
<dbReference type="Pfam" id="PF03032">
    <property type="entry name" value="FSAP_sig_propep"/>
    <property type="match status" value="1"/>
</dbReference>